<keyword id="KW-0687">Ribonucleoprotein</keyword>
<keyword id="KW-0689">Ribosomal protein</keyword>
<keyword id="KW-0694">RNA-binding</keyword>
<keyword id="KW-0699">rRNA-binding</keyword>
<reference key="1">
    <citation type="submission" date="2007-09" db="EMBL/GenBank/DDBJ databases">
        <title>Complete genome sequencing of Rickettsia bellii.</title>
        <authorList>
            <person name="Madan A."/>
            <person name="Lee H."/>
            <person name="Madan A."/>
            <person name="Yoon J.-G."/>
            <person name="Ryu G.-Y."/>
            <person name="Dasch G."/>
            <person name="Ereemeva M."/>
        </authorList>
    </citation>
    <scope>NUCLEOTIDE SEQUENCE [LARGE SCALE GENOMIC DNA]</scope>
    <source>
        <strain>OSU 85-389</strain>
    </source>
</reference>
<protein>
    <recommendedName>
        <fullName evidence="1">Small ribosomal subunit protein uS19</fullName>
    </recommendedName>
    <alternativeName>
        <fullName evidence="2">30S ribosomal protein S19</fullName>
    </alternativeName>
</protein>
<name>RS19_RICB8</name>
<organism>
    <name type="scientific">Rickettsia bellii (strain OSU 85-389)</name>
    <dbReference type="NCBI Taxonomy" id="391896"/>
    <lineage>
        <taxon>Bacteria</taxon>
        <taxon>Pseudomonadati</taxon>
        <taxon>Pseudomonadota</taxon>
        <taxon>Alphaproteobacteria</taxon>
        <taxon>Rickettsiales</taxon>
        <taxon>Rickettsiaceae</taxon>
        <taxon>Rickettsieae</taxon>
        <taxon>Rickettsia</taxon>
        <taxon>belli group</taxon>
    </lineage>
</organism>
<gene>
    <name evidence="1" type="primary">rpsS</name>
    <name type="ordered locus">A1I_02055</name>
</gene>
<feature type="chain" id="PRO_1000051114" description="Small ribosomal subunit protein uS19">
    <location>
        <begin position="1"/>
        <end position="92"/>
    </location>
</feature>
<sequence length="92" mass="10498">MARSVWKGPFVDGYLIKKVQKLMESGKSEMIKTWSRRSTILPIFVGFTFSVHNGNKFIPVSVNEEMVGRKLGEFSPTRTFHGHGADKKVKRK</sequence>
<evidence type="ECO:0000255" key="1">
    <source>
        <dbReference type="HAMAP-Rule" id="MF_00531"/>
    </source>
</evidence>
<evidence type="ECO:0000305" key="2"/>
<accession>A8GVB8</accession>
<dbReference type="EMBL" id="CP000849">
    <property type="protein sequence ID" value="ABV78795.1"/>
    <property type="molecule type" value="Genomic_DNA"/>
</dbReference>
<dbReference type="RefSeq" id="WP_011477717.1">
    <property type="nucleotide sequence ID" value="NC_009883.1"/>
</dbReference>
<dbReference type="SMR" id="A8GVB8"/>
<dbReference type="KEGG" id="rbo:A1I_02055"/>
<dbReference type="HOGENOM" id="CLU_144911_0_1_5"/>
<dbReference type="GO" id="GO:0005737">
    <property type="term" value="C:cytoplasm"/>
    <property type="evidence" value="ECO:0007669"/>
    <property type="project" value="UniProtKB-ARBA"/>
</dbReference>
<dbReference type="GO" id="GO:0015935">
    <property type="term" value="C:small ribosomal subunit"/>
    <property type="evidence" value="ECO:0007669"/>
    <property type="project" value="InterPro"/>
</dbReference>
<dbReference type="GO" id="GO:0019843">
    <property type="term" value="F:rRNA binding"/>
    <property type="evidence" value="ECO:0007669"/>
    <property type="project" value="UniProtKB-UniRule"/>
</dbReference>
<dbReference type="GO" id="GO:0003735">
    <property type="term" value="F:structural constituent of ribosome"/>
    <property type="evidence" value="ECO:0007669"/>
    <property type="project" value="InterPro"/>
</dbReference>
<dbReference type="GO" id="GO:0000028">
    <property type="term" value="P:ribosomal small subunit assembly"/>
    <property type="evidence" value="ECO:0007669"/>
    <property type="project" value="TreeGrafter"/>
</dbReference>
<dbReference type="GO" id="GO:0006412">
    <property type="term" value="P:translation"/>
    <property type="evidence" value="ECO:0007669"/>
    <property type="project" value="UniProtKB-UniRule"/>
</dbReference>
<dbReference type="FunFam" id="3.30.860.10:FF:000001">
    <property type="entry name" value="30S ribosomal protein S19"/>
    <property type="match status" value="1"/>
</dbReference>
<dbReference type="Gene3D" id="3.30.860.10">
    <property type="entry name" value="30s Ribosomal Protein S19, Chain A"/>
    <property type="match status" value="1"/>
</dbReference>
<dbReference type="HAMAP" id="MF_00531">
    <property type="entry name" value="Ribosomal_uS19"/>
    <property type="match status" value="1"/>
</dbReference>
<dbReference type="InterPro" id="IPR002222">
    <property type="entry name" value="Ribosomal_uS19"/>
</dbReference>
<dbReference type="InterPro" id="IPR005732">
    <property type="entry name" value="Ribosomal_uS19_bac-type"/>
</dbReference>
<dbReference type="InterPro" id="IPR020934">
    <property type="entry name" value="Ribosomal_uS19_CS"/>
</dbReference>
<dbReference type="InterPro" id="IPR023575">
    <property type="entry name" value="Ribosomal_uS19_SF"/>
</dbReference>
<dbReference type="NCBIfam" id="TIGR01050">
    <property type="entry name" value="rpsS_bact"/>
    <property type="match status" value="1"/>
</dbReference>
<dbReference type="PANTHER" id="PTHR11880">
    <property type="entry name" value="RIBOSOMAL PROTEIN S19P FAMILY MEMBER"/>
    <property type="match status" value="1"/>
</dbReference>
<dbReference type="PANTHER" id="PTHR11880:SF8">
    <property type="entry name" value="SMALL RIBOSOMAL SUBUNIT PROTEIN US19M"/>
    <property type="match status" value="1"/>
</dbReference>
<dbReference type="Pfam" id="PF00203">
    <property type="entry name" value="Ribosomal_S19"/>
    <property type="match status" value="1"/>
</dbReference>
<dbReference type="PIRSF" id="PIRSF002144">
    <property type="entry name" value="Ribosomal_S19"/>
    <property type="match status" value="1"/>
</dbReference>
<dbReference type="PRINTS" id="PR00975">
    <property type="entry name" value="RIBOSOMALS19"/>
</dbReference>
<dbReference type="SUPFAM" id="SSF54570">
    <property type="entry name" value="Ribosomal protein S19"/>
    <property type="match status" value="1"/>
</dbReference>
<dbReference type="PROSITE" id="PS00323">
    <property type="entry name" value="RIBOSOMAL_S19"/>
    <property type="match status" value="1"/>
</dbReference>
<comment type="function">
    <text evidence="1">Protein S19 forms a complex with S13 that binds strongly to the 16S ribosomal RNA.</text>
</comment>
<comment type="similarity">
    <text evidence="1">Belongs to the universal ribosomal protein uS19 family.</text>
</comment>
<proteinExistence type="inferred from homology"/>